<sequence>MGRILKAILGQLSFFTIIPSPSASLEEIAEFSFISPLMVGIITGIIDWFVVLLGIRLIGSLGALLLIPTVEIIRGFHHLDGLLDMGDALMVGKERRPQVLHDLQTGSGAIGLFLVYFSIFLIATLNLNVSNLWFFLPSEVLARASAISLLGLMKPIPGSYLGKVFHDKMRDKLFSIKFLLVQVFAILFSSPVLILAYVILLLVFYLMAKLVFDGMSGDIVGAIITLSFPIYLLVAEKTCYHYFIFQYSLTLP</sequence>
<protein>
    <recommendedName>
        <fullName evidence="1">Adenosylcobinamide-GDP ribazoletransferase</fullName>
        <ecNumber evidence="1">2.7.8.26</ecNumber>
    </recommendedName>
    <alternativeName>
        <fullName evidence="1">Cobalamin synthase</fullName>
    </alternativeName>
    <alternativeName>
        <fullName evidence="1">Cobalamin-5'-phosphate synthase</fullName>
    </alternativeName>
</protein>
<name>COBS_SULAC</name>
<keyword id="KW-1003">Cell membrane</keyword>
<keyword id="KW-0169">Cobalamin biosynthesis</keyword>
<keyword id="KW-0460">Magnesium</keyword>
<keyword id="KW-0472">Membrane</keyword>
<keyword id="KW-1185">Reference proteome</keyword>
<keyword id="KW-0808">Transferase</keyword>
<keyword id="KW-0812">Transmembrane</keyword>
<keyword id="KW-1133">Transmembrane helix</keyword>
<dbReference type="EC" id="2.7.8.26" evidence="1"/>
<dbReference type="EMBL" id="CP000077">
    <property type="protein sequence ID" value="AAY79827.1"/>
    <property type="molecule type" value="Genomic_DNA"/>
</dbReference>
<dbReference type="RefSeq" id="WP_011277329.1">
    <property type="nucleotide sequence ID" value="NC_007181.1"/>
</dbReference>
<dbReference type="STRING" id="330779.Saci_0412"/>
<dbReference type="GeneID" id="14550941"/>
<dbReference type="GeneID" id="78440762"/>
<dbReference type="KEGG" id="sai:Saci_0412"/>
<dbReference type="PATRIC" id="fig|330779.12.peg.410"/>
<dbReference type="eggNOG" id="arCOG04338">
    <property type="taxonomic scope" value="Archaea"/>
</dbReference>
<dbReference type="HOGENOM" id="CLU_057426_2_0_2"/>
<dbReference type="UniPathway" id="UPA00148">
    <property type="reaction ID" value="UER00238"/>
</dbReference>
<dbReference type="Proteomes" id="UP000001018">
    <property type="component" value="Chromosome"/>
</dbReference>
<dbReference type="GO" id="GO:0005886">
    <property type="term" value="C:plasma membrane"/>
    <property type="evidence" value="ECO:0007669"/>
    <property type="project" value="UniProtKB-SubCell"/>
</dbReference>
<dbReference type="GO" id="GO:0051073">
    <property type="term" value="F:adenosylcobinamide-GDP ribazoletransferase activity"/>
    <property type="evidence" value="ECO:0007669"/>
    <property type="project" value="UniProtKB-UniRule"/>
</dbReference>
<dbReference type="GO" id="GO:0008818">
    <property type="term" value="F:cobalamin 5'-phosphate synthase activity"/>
    <property type="evidence" value="ECO:0007669"/>
    <property type="project" value="UniProtKB-UniRule"/>
</dbReference>
<dbReference type="GO" id="GO:0009236">
    <property type="term" value="P:cobalamin biosynthetic process"/>
    <property type="evidence" value="ECO:0007669"/>
    <property type="project" value="UniProtKB-UniRule"/>
</dbReference>
<dbReference type="HAMAP" id="MF_00719">
    <property type="entry name" value="CobS"/>
    <property type="match status" value="1"/>
</dbReference>
<dbReference type="InterPro" id="IPR003805">
    <property type="entry name" value="CobS"/>
</dbReference>
<dbReference type="NCBIfam" id="TIGR00317">
    <property type="entry name" value="cobS"/>
    <property type="match status" value="1"/>
</dbReference>
<dbReference type="PANTHER" id="PTHR34148">
    <property type="entry name" value="ADENOSYLCOBINAMIDE-GDP RIBAZOLETRANSFERASE"/>
    <property type="match status" value="1"/>
</dbReference>
<dbReference type="PANTHER" id="PTHR34148:SF1">
    <property type="entry name" value="ADENOSYLCOBINAMIDE-GDP RIBAZOLETRANSFERASE"/>
    <property type="match status" value="1"/>
</dbReference>
<dbReference type="Pfam" id="PF02654">
    <property type="entry name" value="CobS"/>
    <property type="match status" value="1"/>
</dbReference>
<evidence type="ECO:0000255" key="1">
    <source>
        <dbReference type="HAMAP-Rule" id="MF_00719"/>
    </source>
</evidence>
<comment type="function">
    <text evidence="1">Joins adenosylcobinamide-GDP and alpha-ribazole to generate adenosylcobalamin (Ado-cobalamin). Also synthesizes adenosylcobalamin 5'-phosphate from adenosylcobinamide-GDP and alpha-ribazole 5'-phosphate.</text>
</comment>
<comment type="catalytic activity">
    <reaction evidence="1">
        <text>alpha-ribazole + adenosylcob(III)inamide-GDP = adenosylcob(III)alamin + GMP + H(+)</text>
        <dbReference type="Rhea" id="RHEA:16049"/>
        <dbReference type="ChEBI" id="CHEBI:10329"/>
        <dbReference type="ChEBI" id="CHEBI:15378"/>
        <dbReference type="ChEBI" id="CHEBI:18408"/>
        <dbReference type="ChEBI" id="CHEBI:58115"/>
        <dbReference type="ChEBI" id="CHEBI:60487"/>
        <dbReference type="EC" id="2.7.8.26"/>
    </reaction>
</comment>
<comment type="catalytic activity">
    <reaction evidence="1">
        <text>alpha-ribazole 5'-phosphate + adenosylcob(III)inamide-GDP = adenosylcob(III)alamin 5'-phosphate + GMP + H(+)</text>
        <dbReference type="Rhea" id="RHEA:23560"/>
        <dbReference type="ChEBI" id="CHEBI:15378"/>
        <dbReference type="ChEBI" id="CHEBI:57918"/>
        <dbReference type="ChEBI" id="CHEBI:58115"/>
        <dbReference type="ChEBI" id="CHEBI:60487"/>
        <dbReference type="ChEBI" id="CHEBI:60493"/>
        <dbReference type="EC" id="2.7.8.26"/>
    </reaction>
</comment>
<comment type="cofactor">
    <cofactor evidence="1">
        <name>Mg(2+)</name>
        <dbReference type="ChEBI" id="CHEBI:18420"/>
    </cofactor>
</comment>
<comment type="pathway">
    <text evidence="1">Cofactor biosynthesis; adenosylcobalamin biosynthesis; adenosylcobalamin from cob(II)yrinate a,c-diamide: step 7/7.</text>
</comment>
<comment type="subcellular location">
    <subcellularLocation>
        <location evidence="1">Cell membrane</location>
        <topology evidence="1">Multi-pass membrane protein</topology>
    </subcellularLocation>
</comment>
<comment type="similarity">
    <text evidence="1">Belongs to the CobS family.</text>
</comment>
<gene>
    <name evidence="1" type="primary">cobS</name>
    <name type="ordered locus">Saci_0412</name>
</gene>
<feature type="chain" id="PRO_0000146920" description="Adenosylcobinamide-GDP ribazoletransferase">
    <location>
        <begin position="1"/>
        <end position="252"/>
    </location>
</feature>
<feature type="transmembrane region" description="Helical" evidence="1">
    <location>
        <begin position="33"/>
        <end position="53"/>
    </location>
</feature>
<feature type="transmembrane region" description="Helical" evidence="1">
    <location>
        <begin position="105"/>
        <end position="125"/>
    </location>
</feature>
<feature type="transmembrane region" description="Helical" evidence="1">
    <location>
        <begin position="132"/>
        <end position="152"/>
    </location>
</feature>
<feature type="transmembrane region" description="Helical" evidence="1">
    <location>
        <begin position="184"/>
        <end position="204"/>
    </location>
</feature>
<feature type="transmembrane region" description="Helical" evidence="1">
    <location>
        <begin position="215"/>
        <end position="235"/>
    </location>
</feature>
<reference key="1">
    <citation type="journal article" date="2005" name="J. Bacteriol.">
        <title>The genome of Sulfolobus acidocaldarius, a model organism of the Crenarchaeota.</title>
        <authorList>
            <person name="Chen L."/>
            <person name="Bruegger K."/>
            <person name="Skovgaard M."/>
            <person name="Redder P."/>
            <person name="She Q."/>
            <person name="Torarinsson E."/>
            <person name="Greve B."/>
            <person name="Awayez M."/>
            <person name="Zibat A."/>
            <person name="Klenk H.-P."/>
            <person name="Garrett R.A."/>
        </authorList>
    </citation>
    <scope>NUCLEOTIDE SEQUENCE [LARGE SCALE GENOMIC DNA]</scope>
    <source>
        <strain>ATCC 33909 / DSM 639 / JCM 8929 / NBRC 15157 / NCIMB 11770</strain>
    </source>
</reference>
<proteinExistence type="inferred from homology"/>
<organism>
    <name type="scientific">Sulfolobus acidocaldarius (strain ATCC 33909 / DSM 639 / JCM 8929 / NBRC 15157 / NCIMB 11770)</name>
    <dbReference type="NCBI Taxonomy" id="330779"/>
    <lineage>
        <taxon>Archaea</taxon>
        <taxon>Thermoproteota</taxon>
        <taxon>Thermoprotei</taxon>
        <taxon>Sulfolobales</taxon>
        <taxon>Sulfolobaceae</taxon>
        <taxon>Sulfolobus</taxon>
    </lineage>
</organism>
<accession>Q4JBK2</accession>